<evidence type="ECO:0000255" key="1">
    <source>
        <dbReference type="HAMAP-Rule" id="MF_00308"/>
    </source>
</evidence>
<evidence type="ECO:0000305" key="2"/>
<organism>
    <name type="scientific">Picrophilus torridus (strain ATCC 700027 / DSM 9790 / JCM 10055 / NBRC 100828 / KAW 2/3)</name>
    <dbReference type="NCBI Taxonomy" id="1122961"/>
    <lineage>
        <taxon>Archaea</taxon>
        <taxon>Methanobacteriati</taxon>
        <taxon>Thermoplasmatota</taxon>
        <taxon>Thermoplasmata</taxon>
        <taxon>Thermoplasmatales</taxon>
        <taxon>Picrophilaceae</taxon>
        <taxon>Picrophilus</taxon>
    </lineage>
</organism>
<accession>Q6KYV2</accession>
<proteinExistence type="inferred from homology"/>
<name>PFDA_PICTO</name>
<dbReference type="EMBL" id="AE017261">
    <property type="protein sequence ID" value="AAT44100.1"/>
    <property type="molecule type" value="Genomic_DNA"/>
</dbReference>
<dbReference type="RefSeq" id="WP_011178316.1">
    <property type="nucleotide sequence ID" value="NC_005877.1"/>
</dbReference>
<dbReference type="SMR" id="Q6KYV2"/>
<dbReference type="STRING" id="263820.PTO1515"/>
<dbReference type="PaxDb" id="263820-PTO1515"/>
<dbReference type="GeneID" id="2844652"/>
<dbReference type="KEGG" id="pto:PTO1515"/>
<dbReference type="eggNOG" id="arCOG01341">
    <property type="taxonomic scope" value="Archaea"/>
</dbReference>
<dbReference type="HOGENOM" id="CLU_156999_0_0_2"/>
<dbReference type="InParanoid" id="Q6KYV2"/>
<dbReference type="OrthoDB" id="10045at2157"/>
<dbReference type="Proteomes" id="UP000000438">
    <property type="component" value="Chromosome"/>
</dbReference>
<dbReference type="GO" id="GO:0005737">
    <property type="term" value="C:cytoplasm"/>
    <property type="evidence" value="ECO:0007669"/>
    <property type="project" value="UniProtKB-SubCell"/>
</dbReference>
<dbReference type="GO" id="GO:0016272">
    <property type="term" value="C:prefoldin complex"/>
    <property type="evidence" value="ECO:0007669"/>
    <property type="project" value="UniProtKB-UniRule"/>
</dbReference>
<dbReference type="GO" id="GO:0051082">
    <property type="term" value="F:unfolded protein binding"/>
    <property type="evidence" value="ECO:0007669"/>
    <property type="project" value="UniProtKB-UniRule"/>
</dbReference>
<dbReference type="GO" id="GO:0006457">
    <property type="term" value="P:protein folding"/>
    <property type="evidence" value="ECO:0007669"/>
    <property type="project" value="UniProtKB-UniRule"/>
</dbReference>
<dbReference type="CDD" id="cd23160">
    <property type="entry name" value="Prefoldin_alpha_GimC"/>
    <property type="match status" value="1"/>
</dbReference>
<dbReference type="Gene3D" id="1.10.287.370">
    <property type="match status" value="1"/>
</dbReference>
<dbReference type="HAMAP" id="MF_00308">
    <property type="entry name" value="PfdA"/>
    <property type="match status" value="1"/>
</dbReference>
<dbReference type="InterPro" id="IPR011599">
    <property type="entry name" value="PFD_alpha_archaea"/>
</dbReference>
<dbReference type="InterPro" id="IPR009053">
    <property type="entry name" value="Prefoldin"/>
</dbReference>
<dbReference type="InterPro" id="IPR004127">
    <property type="entry name" value="Prefoldin_subunit_alpha"/>
</dbReference>
<dbReference type="NCBIfam" id="TIGR00293">
    <property type="entry name" value="prefoldin subunit alpha"/>
    <property type="match status" value="1"/>
</dbReference>
<dbReference type="Pfam" id="PF02996">
    <property type="entry name" value="Prefoldin"/>
    <property type="match status" value="1"/>
</dbReference>
<dbReference type="SUPFAM" id="SSF46579">
    <property type="entry name" value="Prefoldin"/>
    <property type="match status" value="1"/>
</dbReference>
<gene>
    <name evidence="1" type="primary">pfdA</name>
    <name type="ordered locus">PTO1515</name>
</gene>
<reference key="1">
    <citation type="journal article" date="2004" name="Proc. Natl. Acad. Sci. U.S.A.">
        <title>Genome sequence of Picrophilus torridus and its implications for life around pH 0.</title>
        <authorList>
            <person name="Fuetterer O."/>
            <person name="Angelov A."/>
            <person name="Liesegang H."/>
            <person name="Gottschalk G."/>
            <person name="Schleper C."/>
            <person name="Schepers B."/>
            <person name="Dock C."/>
            <person name="Antranikian G."/>
            <person name="Liebl W."/>
        </authorList>
    </citation>
    <scope>NUCLEOTIDE SEQUENCE [LARGE SCALE GENOMIC DNA]</scope>
    <source>
        <strain>ATCC 700027 / DSM 9790 / JCM 10055 / NBRC 100828 / KAW 2/3</strain>
    </source>
</reference>
<feature type="chain" id="PRO_0000153680" description="Prefoldin subunit alpha">
    <location>
        <begin position="1"/>
        <end position="139"/>
    </location>
</feature>
<comment type="function">
    <text evidence="1">Molecular chaperone capable of stabilizing a range of proteins. Seems to fulfill an ATP-independent, HSP70-like function in archaeal de novo protein folding.</text>
</comment>
<comment type="subunit">
    <text evidence="1">Heterohexamer of two alpha and four beta subunits.</text>
</comment>
<comment type="subcellular location">
    <subcellularLocation>
        <location evidence="1">Cytoplasm</location>
    </subcellularLocation>
</comment>
<comment type="similarity">
    <text evidence="2">Belongs to the prefoldin subunit alpha family.</text>
</comment>
<keyword id="KW-0143">Chaperone</keyword>
<keyword id="KW-0963">Cytoplasm</keyword>
<sequence>MAGNNISGEELIEQANYMKSLIDSLNSRIASLSATLSEANQTLSFLKDNESDNSKQLRIMIGSGIYADATIKKDKFIVPVGSGVFIEEERERTIKRLSENLKDLNDSINRLNQQKKELENNYNMLLMQIQELDNNVRQS</sequence>
<protein>
    <recommendedName>
        <fullName evidence="1">Prefoldin subunit alpha</fullName>
    </recommendedName>
    <alternativeName>
        <fullName evidence="1">GimC subunit alpha</fullName>
    </alternativeName>
</protein>